<feature type="chain" id="PRO_0000301468" description="Putative N-acetylmannosamine-6-phosphate 2-epimerase">
    <location>
        <begin position="1"/>
        <end position="221"/>
    </location>
</feature>
<gene>
    <name evidence="1" type="primary">nanE</name>
    <name type="ordered locus">CPF_0177</name>
</gene>
<organism>
    <name type="scientific">Clostridium perfringens (strain ATCC 13124 / DSM 756 / JCM 1290 / NCIMB 6125 / NCTC 8237 / Type A)</name>
    <dbReference type="NCBI Taxonomy" id="195103"/>
    <lineage>
        <taxon>Bacteria</taxon>
        <taxon>Bacillati</taxon>
        <taxon>Bacillota</taxon>
        <taxon>Clostridia</taxon>
        <taxon>Eubacteriales</taxon>
        <taxon>Clostridiaceae</taxon>
        <taxon>Clostridium</taxon>
    </lineage>
</organism>
<name>NANE_CLOP1</name>
<dbReference type="EC" id="5.1.3.9" evidence="1"/>
<dbReference type="EMBL" id="CP000246">
    <property type="protein sequence ID" value="ABG84369.1"/>
    <property type="molecule type" value="Genomic_DNA"/>
</dbReference>
<dbReference type="RefSeq" id="WP_003452659.1">
    <property type="nucleotide sequence ID" value="NC_008261.1"/>
</dbReference>
<dbReference type="PDB" id="4UTT">
    <property type="method" value="X-ray"/>
    <property type="resolution" value="1.71 A"/>
    <property type="chains" value="A/B/C/D=1-220"/>
</dbReference>
<dbReference type="PDBsum" id="4UTT"/>
<dbReference type="SMR" id="Q0TUP9"/>
<dbReference type="STRING" id="195103.CPF_0177"/>
<dbReference type="PaxDb" id="195103-CPF_0177"/>
<dbReference type="KEGG" id="cpf:CPF_0177"/>
<dbReference type="eggNOG" id="COG3010">
    <property type="taxonomic scope" value="Bacteria"/>
</dbReference>
<dbReference type="HOGENOM" id="CLU_086300_1_0_9"/>
<dbReference type="UniPathway" id="UPA00629">
    <property type="reaction ID" value="UER00682"/>
</dbReference>
<dbReference type="Proteomes" id="UP000001823">
    <property type="component" value="Chromosome"/>
</dbReference>
<dbReference type="GO" id="GO:0005829">
    <property type="term" value="C:cytosol"/>
    <property type="evidence" value="ECO:0007669"/>
    <property type="project" value="TreeGrafter"/>
</dbReference>
<dbReference type="GO" id="GO:0047465">
    <property type="term" value="F:N-acylglucosamine-6-phosphate 2-epimerase activity"/>
    <property type="evidence" value="ECO:0007669"/>
    <property type="project" value="UniProtKB-EC"/>
</dbReference>
<dbReference type="GO" id="GO:0005975">
    <property type="term" value="P:carbohydrate metabolic process"/>
    <property type="evidence" value="ECO:0007669"/>
    <property type="project" value="UniProtKB-UniRule"/>
</dbReference>
<dbReference type="GO" id="GO:0006053">
    <property type="term" value="P:N-acetylmannosamine catabolic process"/>
    <property type="evidence" value="ECO:0007669"/>
    <property type="project" value="TreeGrafter"/>
</dbReference>
<dbReference type="GO" id="GO:0019262">
    <property type="term" value="P:N-acetylneuraminate catabolic process"/>
    <property type="evidence" value="ECO:0007669"/>
    <property type="project" value="UniProtKB-UniRule"/>
</dbReference>
<dbReference type="CDD" id="cd04729">
    <property type="entry name" value="NanE"/>
    <property type="match status" value="1"/>
</dbReference>
<dbReference type="FunFam" id="3.20.20.70:FF:000035">
    <property type="entry name" value="Putative N-acetylmannosamine-6-phosphate 2-epimerase"/>
    <property type="match status" value="1"/>
</dbReference>
<dbReference type="Gene3D" id="3.20.20.70">
    <property type="entry name" value="Aldolase class I"/>
    <property type="match status" value="1"/>
</dbReference>
<dbReference type="HAMAP" id="MF_01235">
    <property type="entry name" value="ManNAc6P_epimer"/>
    <property type="match status" value="1"/>
</dbReference>
<dbReference type="InterPro" id="IPR013785">
    <property type="entry name" value="Aldolase_TIM"/>
</dbReference>
<dbReference type="InterPro" id="IPR007260">
    <property type="entry name" value="NanE"/>
</dbReference>
<dbReference type="InterPro" id="IPR011060">
    <property type="entry name" value="RibuloseP-bd_barrel"/>
</dbReference>
<dbReference type="NCBIfam" id="NF002231">
    <property type="entry name" value="PRK01130.1"/>
    <property type="match status" value="1"/>
</dbReference>
<dbReference type="PANTHER" id="PTHR36204">
    <property type="entry name" value="N-ACETYLMANNOSAMINE-6-PHOSPHATE 2-EPIMERASE-RELATED"/>
    <property type="match status" value="1"/>
</dbReference>
<dbReference type="PANTHER" id="PTHR36204:SF1">
    <property type="entry name" value="N-ACETYLMANNOSAMINE-6-PHOSPHATE 2-EPIMERASE-RELATED"/>
    <property type="match status" value="1"/>
</dbReference>
<dbReference type="Pfam" id="PF04131">
    <property type="entry name" value="NanE"/>
    <property type="match status" value="1"/>
</dbReference>
<dbReference type="SUPFAM" id="SSF51366">
    <property type="entry name" value="Ribulose-phoshate binding barrel"/>
    <property type="match status" value="1"/>
</dbReference>
<reference key="1">
    <citation type="journal article" date="2006" name="Genome Res.">
        <title>Skewed genomic variability in strains of the toxigenic bacterial pathogen, Clostridium perfringens.</title>
        <authorList>
            <person name="Myers G.S.A."/>
            <person name="Rasko D.A."/>
            <person name="Cheung J.K."/>
            <person name="Ravel J."/>
            <person name="Seshadri R."/>
            <person name="DeBoy R.T."/>
            <person name="Ren Q."/>
            <person name="Varga J."/>
            <person name="Awad M.M."/>
            <person name="Brinkac L.M."/>
            <person name="Daugherty S.C."/>
            <person name="Haft D.H."/>
            <person name="Dodson R.J."/>
            <person name="Madupu R."/>
            <person name="Nelson W.C."/>
            <person name="Rosovitz M.J."/>
            <person name="Sullivan S.A."/>
            <person name="Khouri H."/>
            <person name="Dimitrov G.I."/>
            <person name="Watkins K.L."/>
            <person name="Mulligan S."/>
            <person name="Benton J."/>
            <person name="Radune D."/>
            <person name="Fisher D.J."/>
            <person name="Atkins H.S."/>
            <person name="Hiscox T."/>
            <person name="Jost B.H."/>
            <person name="Billington S.J."/>
            <person name="Songer J.G."/>
            <person name="McClane B.A."/>
            <person name="Titball R.W."/>
            <person name="Rood J.I."/>
            <person name="Melville S.B."/>
            <person name="Paulsen I.T."/>
        </authorList>
    </citation>
    <scope>NUCLEOTIDE SEQUENCE [LARGE SCALE GENOMIC DNA]</scope>
    <source>
        <strain>ATCC 13124 / DSM 756 / JCM 1290 / NCIMB 6125 / NCTC 8237 / S 107 / Type A</strain>
    </source>
</reference>
<keyword id="KW-0002">3D-structure</keyword>
<keyword id="KW-0119">Carbohydrate metabolism</keyword>
<keyword id="KW-0413">Isomerase</keyword>
<sequence length="221" mass="24153">MLDVVKGNLIVSCQALSDEPLHSSFIMGRMAIAAKQGGAAAIRAQGVNDINEIKEVTKLPIIGIIKRNYDDSEIYITPTMKEVDELLKTDCEMIALDATKRKRPNGENVKDLVDAIHAKGRLAMADISTLEEGIEAEKLGFDCVSTTLSGYTPYSKQSNSVDFELLEELVKTVKIPVICEGRINTPEELKKALDLGAYSAVVGGAITRPQQITKRFTDILK</sequence>
<evidence type="ECO:0000255" key="1">
    <source>
        <dbReference type="HAMAP-Rule" id="MF_01235"/>
    </source>
</evidence>
<protein>
    <recommendedName>
        <fullName evidence="1">Putative N-acetylmannosamine-6-phosphate 2-epimerase</fullName>
        <ecNumber evidence="1">5.1.3.9</ecNumber>
    </recommendedName>
    <alternativeName>
        <fullName evidence="1">ManNAc-6-P epimerase</fullName>
    </alternativeName>
</protein>
<proteinExistence type="evidence at protein level"/>
<accession>Q0TUP9</accession>
<comment type="function">
    <text evidence="1">Converts N-acetylmannosamine-6-phosphate (ManNAc-6-P) to N-acetylglucosamine-6-phosphate (GlcNAc-6-P).</text>
</comment>
<comment type="catalytic activity">
    <reaction evidence="1">
        <text>an N-acyl-D-glucosamine 6-phosphate = an N-acyl-D-mannosamine 6-phosphate</text>
        <dbReference type="Rhea" id="RHEA:23932"/>
        <dbReference type="ChEBI" id="CHEBI:57599"/>
        <dbReference type="ChEBI" id="CHEBI:57666"/>
        <dbReference type="EC" id="5.1.3.9"/>
    </reaction>
</comment>
<comment type="pathway">
    <text evidence="1">Amino-sugar metabolism; N-acetylneuraminate degradation; D-fructose 6-phosphate from N-acetylneuraminate: step 3/5.</text>
</comment>
<comment type="similarity">
    <text evidence="1">Belongs to the NanE family.</text>
</comment>